<name>CHIA1_EMENI</name>
<proteinExistence type="evidence at protein level"/>
<dbReference type="EC" id="3.2.1.14"/>
<dbReference type="EMBL" id="BN001302">
    <property type="protein sequence ID" value="CBF74186.1"/>
    <property type="molecule type" value="Genomic_DNA"/>
</dbReference>
<dbReference type="EMBL" id="AACD01000145">
    <property type="protein sequence ID" value="EAA58979.1"/>
    <property type="molecule type" value="Genomic_DNA"/>
</dbReference>
<dbReference type="PIR" id="JW0067">
    <property type="entry name" value="JW0067"/>
</dbReference>
<dbReference type="RefSeq" id="XP_681510.1">
    <property type="nucleotide sequence ID" value="XM_676418.1"/>
</dbReference>
<dbReference type="SMR" id="G5EB30"/>
<dbReference type="STRING" id="227321.G5EB30"/>
<dbReference type="CAZy" id="GH18">
    <property type="family name" value="Glycoside Hydrolase Family 18"/>
</dbReference>
<dbReference type="EnsemblFungi" id="CBF74186">
    <property type="protein sequence ID" value="CBF74186"/>
    <property type="gene ID" value="ANIA_08241"/>
</dbReference>
<dbReference type="KEGG" id="ani:ANIA_08241"/>
<dbReference type="VEuPathDB" id="FungiDB:AN8241"/>
<dbReference type="eggNOG" id="KOG0516">
    <property type="taxonomic scope" value="Eukaryota"/>
</dbReference>
<dbReference type="eggNOG" id="KOG4701">
    <property type="taxonomic scope" value="Eukaryota"/>
</dbReference>
<dbReference type="HOGENOM" id="CLU_009107_2_0_1"/>
<dbReference type="InParanoid" id="G5EB30"/>
<dbReference type="OMA" id="NGPYIAM"/>
<dbReference type="OrthoDB" id="6020543at2759"/>
<dbReference type="Proteomes" id="UP000000560">
    <property type="component" value="Chromosome II"/>
</dbReference>
<dbReference type="GO" id="GO:0051286">
    <property type="term" value="C:cell tip"/>
    <property type="evidence" value="ECO:0007669"/>
    <property type="project" value="UniProtKB-SubCell"/>
</dbReference>
<dbReference type="GO" id="GO:0005576">
    <property type="term" value="C:extracellular region"/>
    <property type="evidence" value="ECO:0000318"/>
    <property type="project" value="GO_Central"/>
</dbReference>
<dbReference type="GO" id="GO:0005886">
    <property type="term" value="C:plasma membrane"/>
    <property type="evidence" value="ECO:0007669"/>
    <property type="project" value="UniProtKB-SubCell"/>
</dbReference>
<dbReference type="GO" id="GO:0098552">
    <property type="term" value="C:side of membrane"/>
    <property type="evidence" value="ECO:0007669"/>
    <property type="project" value="UniProtKB-KW"/>
</dbReference>
<dbReference type="GO" id="GO:0008061">
    <property type="term" value="F:chitin binding"/>
    <property type="evidence" value="ECO:0007669"/>
    <property type="project" value="UniProtKB-KW"/>
</dbReference>
<dbReference type="GO" id="GO:0004568">
    <property type="term" value="F:chitinase activity"/>
    <property type="evidence" value="ECO:0000318"/>
    <property type="project" value="GO_Central"/>
</dbReference>
<dbReference type="GO" id="GO:0008843">
    <property type="term" value="F:endochitinase activity"/>
    <property type="evidence" value="ECO:0007669"/>
    <property type="project" value="UniProtKB-EC"/>
</dbReference>
<dbReference type="GO" id="GO:0006032">
    <property type="term" value="P:chitin catabolic process"/>
    <property type="evidence" value="ECO:0007669"/>
    <property type="project" value="UniProtKB-KW"/>
</dbReference>
<dbReference type="GO" id="GO:0000272">
    <property type="term" value="P:polysaccharide catabolic process"/>
    <property type="evidence" value="ECO:0007669"/>
    <property type="project" value="UniProtKB-KW"/>
</dbReference>
<dbReference type="CDD" id="cd02877">
    <property type="entry name" value="GH18_hevamine_XipI_class_III"/>
    <property type="match status" value="1"/>
</dbReference>
<dbReference type="FunFam" id="3.20.20.80:FF:000150">
    <property type="entry name" value="Class III chitinase ChiA1"/>
    <property type="match status" value="1"/>
</dbReference>
<dbReference type="Gene3D" id="3.20.20.80">
    <property type="entry name" value="Glycosidases"/>
    <property type="match status" value="1"/>
</dbReference>
<dbReference type="InterPro" id="IPR045321">
    <property type="entry name" value="Cts1-like"/>
</dbReference>
<dbReference type="InterPro" id="IPR001223">
    <property type="entry name" value="Glyco_hydro18_cat"/>
</dbReference>
<dbReference type="InterPro" id="IPR001579">
    <property type="entry name" value="Glyco_hydro_18_chit_AS"/>
</dbReference>
<dbReference type="InterPro" id="IPR017853">
    <property type="entry name" value="Glycoside_hydrolase_SF"/>
</dbReference>
<dbReference type="InterPro" id="IPR050542">
    <property type="entry name" value="Glycosyl_Hydrlase18_Chitinase"/>
</dbReference>
<dbReference type="PANTHER" id="PTHR45708">
    <property type="entry name" value="ENDOCHITINASE"/>
    <property type="match status" value="1"/>
</dbReference>
<dbReference type="PANTHER" id="PTHR45708:SF47">
    <property type="entry name" value="ENDOCHITINASE A"/>
    <property type="match status" value="1"/>
</dbReference>
<dbReference type="Pfam" id="PF00704">
    <property type="entry name" value="Glyco_hydro_18"/>
    <property type="match status" value="1"/>
</dbReference>
<dbReference type="SUPFAM" id="SSF51445">
    <property type="entry name" value="(Trans)glycosidases"/>
    <property type="match status" value="1"/>
</dbReference>
<dbReference type="PROSITE" id="PS01095">
    <property type="entry name" value="GH18_1"/>
    <property type="match status" value="1"/>
</dbReference>
<dbReference type="PROSITE" id="PS51910">
    <property type="entry name" value="GH18_2"/>
    <property type="match status" value="1"/>
</dbReference>
<sequence>MAPKLFTFVSALSGLASLASAFHAEAKSNIAVYYGQGVNQPRLAEFCAETSYDIINIGFINSFPEQNPLTGLPGSDFGNQCWADTFVVDGIASQLYSHCPNIAEDIPKCQAAGKKVFLSLGGATPTYWFDTIDASTKLADFLWGAFGPVTDAWTVADKPRPFGNAVVDGFDFDIEFFGSKGYANMIKRFRRRFGEVPDQTFYISAAPQCSIPDEQLSVAIKNAVIDFVWVQFYNTPGCSARDFVLGTKNGFNYDSWVEVIKAGANPNAKLYVGLPASGAAANLGYYLTPEEVKPLVKKYMDKYPETFGGVMLWEATQARNNQIDGVGYNEKIREILYDLDPNHPPPTTSPTPTPTPSTTTTSTTSTTSTTSATSTTSTTSTTSTTSTTPTTSTTSTTSTTTPTPSPSPSTASSSTTETVTPSPKPSPSESSTTSETSSLPSTSTPVVSETPSETKTPTSSSAPPLSSSSPVGGSSSTASSSTSTPSETPSASSTRAVSETSTHISTSTSSGPETSLTGSSTSVPATSSSVPSSAISPSSTPVISETPRPPVTSSSSSTFVSSTSTSTDCSESSTAIGTHSSSSISETPSASTPAASPSTSPETTKTLTVFPTPGSSVSTGTTSASTLSSSVPATSGGHTETSTVSTSSANQTPSASTSKPLIPTNSASSTSTGSVTSTPSAPGVPSSSAGSDETATTSTTDSEPTSTSSGSVTAKPTTTEPATTTTIIVTSYTSICPTGFTTITTTITSTYCPGTASATATAIAPTTDVPGSGSGSSPAQPTITADIPEGWTTTVTVCTVCAATPTTVTLTLPPATTTEESTSAQPTGEVPSSDGSGSGEVSTTTVVVVPAPTGNAGDGVPAPGANVGEEYTAAPGSATTSKPLIGGGASGAHTAYPYASSTFHIIPSASAHVPVPSGSGSSPSGTQGGASPTFTGAGSRYDVVKGVPALVALALSLLAVL</sequence>
<evidence type="ECO:0000250" key="1"/>
<evidence type="ECO:0000255" key="2"/>
<evidence type="ECO:0000255" key="3">
    <source>
        <dbReference type="PROSITE-ProRule" id="PRU01258"/>
    </source>
</evidence>
<evidence type="ECO:0000256" key="4">
    <source>
        <dbReference type="SAM" id="MobiDB-lite"/>
    </source>
</evidence>
<evidence type="ECO:0000269" key="5">
    <source>
    </source>
</evidence>
<evidence type="ECO:0000305" key="6"/>
<reference key="1">
    <citation type="journal article" date="2005" name="Nature">
        <title>Sequencing of Aspergillus nidulans and comparative analysis with A. fumigatus and A. oryzae.</title>
        <authorList>
            <person name="Galagan J.E."/>
            <person name="Calvo S.E."/>
            <person name="Cuomo C."/>
            <person name="Ma L.-J."/>
            <person name="Wortman J.R."/>
            <person name="Batzoglou S."/>
            <person name="Lee S.-I."/>
            <person name="Bastuerkmen M."/>
            <person name="Spevak C.C."/>
            <person name="Clutterbuck J."/>
            <person name="Kapitonov V."/>
            <person name="Jurka J."/>
            <person name="Scazzocchio C."/>
            <person name="Farman M.L."/>
            <person name="Butler J."/>
            <person name="Purcell S."/>
            <person name="Harris S."/>
            <person name="Braus G.H."/>
            <person name="Draht O."/>
            <person name="Busch S."/>
            <person name="D'Enfert C."/>
            <person name="Bouchier C."/>
            <person name="Goldman G.H."/>
            <person name="Bell-Pedersen D."/>
            <person name="Griffiths-Jones S."/>
            <person name="Doonan J.H."/>
            <person name="Yu J."/>
            <person name="Vienken K."/>
            <person name="Pain A."/>
            <person name="Freitag M."/>
            <person name="Selker E.U."/>
            <person name="Archer D.B."/>
            <person name="Penalva M.A."/>
            <person name="Oakley B.R."/>
            <person name="Momany M."/>
            <person name="Tanaka T."/>
            <person name="Kumagai T."/>
            <person name="Asai K."/>
            <person name="Machida M."/>
            <person name="Nierman W.C."/>
            <person name="Denning D.W."/>
            <person name="Caddick M.X."/>
            <person name="Hynes M."/>
            <person name="Paoletti M."/>
            <person name="Fischer R."/>
            <person name="Miller B.L."/>
            <person name="Dyer P.S."/>
            <person name="Sachs M.S."/>
            <person name="Osmani S.A."/>
            <person name="Birren B.W."/>
        </authorList>
    </citation>
    <scope>NUCLEOTIDE SEQUENCE [LARGE SCALE GENOMIC DNA]</scope>
    <source>
        <strain>FGSC A4 / ATCC 38163 / CBS 112.46 / NRRL 194 / M139</strain>
    </source>
</reference>
<reference key="2">
    <citation type="journal article" date="2009" name="Fungal Genet. Biol.">
        <title>The 2008 update of the Aspergillus nidulans genome annotation: a community effort.</title>
        <authorList>
            <person name="Wortman J.R."/>
            <person name="Gilsenan J.M."/>
            <person name="Joardar V."/>
            <person name="Deegan J."/>
            <person name="Clutterbuck J."/>
            <person name="Andersen M.R."/>
            <person name="Archer D."/>
            <person name="Bencina M."/>
            <person name="Braus G."/>
            <person name="Coutinho P."/>
            <person name="von Dohren H."/>
            <person name="Doonan J."/>
            <person name="Driessen A.J."/>
            <person name="Durek P."/>
            <person name="Espeso E."/>
            <person name="Fekete E."/>
            <person name="Flipphi M."/>
            <person name="Estrada C.G."/>
            <person name="Geysens S."/>
            <person name="Goldman G."/>
            <person name="de Groot P.W."/>
            <person name="Hansen K."/>
            <person name="Harris S.D."/>
            <person name="Heinekamp T."/>
            <person name="Helmstaedt K."/>
            <person name="Henrissat B."/>
            <person name="Hofmann G."/>
            <person name="Homan T."/>
            <person name="Horio T."/>
            <person name="Horiuchi H."/>
            <person name="James S."/>
            <person name="Jones M."/>
            <person name="Karaffa L."/>
            <person name="Karanyi Z."/>
            <person name="Kato M."/>
            <person name="Keller N."/>
            <person name="Kelly D.E."/>
            <person name="Kiel J.A."/>
            <person name="Kim J.M."/>
            <person name="van der Klei I.J."/>
            <person name="Klis F.M."/>
            <person name="Kovalchuk A."/>
            <person name="Krasevec N."/>
            <person name="Kubicek C.P."/>
            <person name="Liu B."/>
            <person name="Maccabe A."/>
            <person name="Meyer V."/>
            <person name="Mirabito P."/>
            <person name="Miskei M."/>
            <person name="Mos M."/>
            <person name="Mullins J."/>
            <person name="Nelson D.R."/>
            <person name="Nielsen J."/>
            <person name="Oakley B.R."/>
            <person name="Osmani S.A."/>
            <person name="Pakula T."/>
            <person name="Paszewski A."/>
            <person name="Paulsen I."/>
            <person name="Pilsyk S."/>
            <person name="Pocsi I."/>
            <person name="Punt P.J."/>
            <person name="Ram A.F."/>
            <person name="Ren Q."/>
            <person name="Robellet X."/>
            <person name="Robson G."/>
            <person name="Seiboth B."/>
            <person name="van Solingen P."/>
            <person name="Specht T."/>
            <person name="Sun J."/>
            <person name="Taheri-Talesh N."/>
            <person name="Takeshita N."/>
            <person name="Ussery D."/>
            <person name="vanKuyk P.A."/>
            <person name="Visser H."/>
            <person name="van de Vondervoort P.J."/>
            <person name="de Vries R.P."/>
            <person name="Walton J."/>
            <person name="Xiang X."/>
            <person name="Xiong Y."/>
            <person name="Zeng A.P."/>
            <person name="Brandt B.W."/>
            <person name="Cornell M.J."/>
            <person name="van den Hondel C.A."/>
            <person name="Visser J."/>
            <person name="Oliver S.G."/>
            <person name="Turner G."/>
        </authorList>
    </citation>
    <scope>GENOME REANNOTATION</scope>
    <source>
        <strain>FGSC A4 / ATCC 38163 / CBS 112.46 / NRRL 194 / M139</strain>
    </source>
</reference>
<reference key="3">
    <citation type="journal article" date="2008" name="Fungal Genet. Biol.">
        <title>Aspergillus nidulans ChiA is a glycosylphosphatidylinositol (GPI)-anchored chitinase specifically localized at polarized growth sites.</title>
        <authorList>
            <person name="Yamazaki H."/>
            <person name="Tanaka A."/>
            <person name="Kaneko J."/>
            <person name="Ohta A."/>
            <person name="Horiuchi H."/>
        </authorList>
    </citation>
    <scope>GLYCOSYLATION</scope>
    <scope>GPI-ANCHOR AT GLY-936</scope>
    <scope>SUBCELLULAR LOCATION</scope>
    <scope>INDUCTION</scope>
    <scope>FUNCTION</scope>
    <scope>CATALYTIC ACTIVITY</scope>
</reference>
<reference key="4">
    <citation type="journal article" date="2009" name="J. Gen. Appl. Microbiol.">
        <title>Using a new GPI-anchored-protein identification system to mine the protein databases of Aspergillus fumigatus, Aspergillus nidulans, and Aspergillus oryzae.</title>
        <authorList>
            <person name="Cao W."/>
            <person name="Maruyama J."/>
            <person name="Kitamoto K."/>
            <person name="Sumikoshi K."/>
            <person name="Terada T."/>
            <person name="Nakamura S."/>
            <person name="Shimizu K."/>
        </authorList>
    </citation>
    <scope>IDENTIFICATION OF GPI-ANCHOR</scope>
</reference>
<protein>
    <recommendedName>
        <fullName>Endochitinase A</fullName>
        <ecNumber>3.2.1.14</ecNumber>
    </recommendedName>
    <alternativeName>
        <fullName>Chitinase A</fullName>
    </alternativeName>
</protein>
<organism>
    <name type="scientific">Emericella nidulans (strain FGSC A4 / ATCC 38163 / CBS 112.46 / NRRL 194 / M139)</name>
    <name type="common">Aspergillus nidulans</name>
    <dbReference type="NCBI Taxonomy" id="227321"/>
    <lineage>
        <taxon>Eukaryota</taxon>
        <taxon>Fungi</taxon>
        <taxon>Dikarya</taxon>
        <taxon>Ascomycota</taxon>
        <taxon>Pezizomycotina</taxon>
        <taxon>Eurotiomycetes</taxon>
        <taxon>Eurotiomycetidae</taxon>
        <taxon>Eurotiales</taxon>
        <taxon>Aspergillaceae</taxon>
        <taxon>Aspergillus</taxon>
        <taxon>Aspergillus subgen. Nidulantes</taxon>
    </lineage>
</organism>
<feature type="signal peptide" evidence="2">
    <location>
        <begin position="1"/>
        <end position="21"/>
    </location>
</feature>
<feature type="chain" id="PRO_0000429818" description="Endochitinase A">
    <location>
        <begin position="22"/>
        <end position="936"/>
    </location>
</feature>
<feature type="propeptide" id="PRO_0000429819" description="Removed in mature form">
    <location>
        <begin position="937"/>
        <end position="961"/>
    </location>
</feature>
<feature type="domain" description="GH18" evidence="3">
    <location>
        <begin position="28"/>
        <end position="339"/>
    </location>
</feature>
<feature type="region of interest" description="Disordered" evidence="4">
    <location>
        <begin position="338"/>
        <end position="720"/>
    </location>
</feature>
<feature type="region of interest" description="Disordered" evidence="4">
    <location>
        <begin position="767"/>
        <end position="787"/>
    </location>
</feature>
<feature type="region of interest" description="Disordered" evidence="4">
    <location>
        <begin position="813"/>
        <end position="842"/>
    </location>
</feature>
<feature type="region of interest" description="Disordered" evidence="4">
    <location>
        <begin position="912"/>
        <end position="933"/>
    </location>
</feature>
<feature type="compositionally biased region" description="Pro residues" evidence="4">
    <location>
        <begin position="342"/>
        <end position="355"/>
    </location>
</feature>
<feature type="compositionally biased region" description="Low complexity" evidence="4">
    <location>
        <begin position="356"/>
        <end position="510"/>
    </location>
</feature>
<feature type="compositionally biased region" description="Low complexity" evidence="4">
    <location>
        <begin position="519"/>
        <end position="544"/>
    </location>
</feature>
<feature type="compositionally biased region" description="Low complexity" evidence="4">
    <location>
        <begin position="552"/>
        <end position="604"/>
    </location>
</feature>
<feature type="compositionally biased region" description="Low complexity" evidence="4">
    <location>
        <begin position="612"/>
        <end position="635"/>
    </location>
</feature>
<feature type="compositionally biased region" description="Polar residues" evidence="4">
    <location>
        <begin position="636"/>
        <end position="665"/>
    </location>
</feature>
<feature type="compositionally biased region" description="Low complexity" evidence="4">
    <location>
        <begin position="666"/>
        <end position="720"/>
    </location>
</feature>
<feature type="active site" description="Proton donor" evidence="3">
    <location>
        <position position="175"/>
    </location>
</feature>
<feature type="lipid moiety-binding region" description="GPI-anchor amidated glycine" evidence="5">
    <location>
        <position position="936"/>
    </location>
</feature>
<accession>G5EB30</accession>
<accession>C8V7G5</accession>
<gene>
    <name type="primary">chiA</name>
    <name type="ORF">AN8241</name>
</gene>
<comment type="function">
    <text evidence="5">GPI-anchored chitinase involved in the degradation of chitin, a component of the cell walls of fungi and exoskeletal elements of some animals (including worms and arthropods). Required to reshape the cell wall at the sites where cell wall remodeling and/or cell wall maturation actively take place such as sites of conidia formation.</text>
</comment>
<comment type="catalytic activity">
    <reaction evidence="5">
        <text>Random endo-hydrolysis of N-acetyl-beta-D-glucosaminide (1-&gt;4)-beta-linkages in chitin and chitodextrins.</text>
        <dbReference type="EC" id="3.2.1.14"/>
    </reaction>
</comment>
<comment type="subcellular location">
    <subcellularLocation>
        <location evidence="5">Cell membrane</location>
        <topology evidence="5">Lipid-anchor</topology>
        <topology evidence="5">GPI-anchor</topology>
    </subcellularLocation>
    <subcellularLocation>
        <location evidence="1">Secreted</location>
        <location evidence="1">Cell wall</location>
    </subcellularLocation>
    <subcellularLocation>
        <location evidence="5">Cell tip</location>
    </subcellularLocation>
    <text>Localizes at the germ tubes of conidia, at hyphal branching sites and hyphal tips.</text>
</comment>
<comment type="induction">
    <text evidence="5">Expressed specifically highly during conidia germination and in the marginal growth regions of colonies.</text>
</comment>
<comment type="PTM">
    <text evidence="5">O-glycosylated but not N-glycosylated.</text>
</comment>
<comment type="similarity">
    <text evidence="6">Belongs to the glycosyl hydrolase 18 family. Chitinase class III subfamily.</text>
</comment>
<keyword id="KW-0119">Carbohydrate metabolism</keyword>
<keyword id="KW-1003">Cell membrane</keyword>
<keyword id="KW-0134">Cell wall</keyword>
<keyword id="KW-0146">Chitin degradation</keyword>
<keyword id="KW-0147">Chitin-binding</keyword>
<keyword id="KW-0325">Glycoprotein</keyword>
<keyword id="KW-0326">Glycosidase</keyword>
<keyword id="KW-0336">GPI-anchor</keyword>
<keyword id="KW-0378">Hydrolase</keyword>
<keyword id="KW-0449">Lipoprotein</keyword>
<keyword id="KW-0472">Membrane</keyword>
<keyword id="KW-0624">Polysaccharide degradation</keyword>
<keyword id="KW-1185">Reference proteome</keyword>
<keyword id="KW-0964">Secreted</keyword>
<keyword id="KW-0732">Signal</keyword>